<feature type="chain" id="PRO_0000076941" description="Galectin-7">
    <location>
        <begin position="1"/>
        <end position="136"/>
    </location>
</feature>
<feature type="domain" description="Galectin" evidence="3">
    <location>
        <begin position="6"/>
        <end position="136"/>
    </location>
</feature>
<feature type="binding site" evidence="2">
    <location>
        <begin position="70"/>
        <end position="76"/>
    </location>
    <ligand>
        <name>a beta-D-galactoside</name>
        <dbReference type="ChEBI" id="CHEBI:28034"/>
    </ligand>
</feature>
<dbReference type="EMBL" id="AF038562">
    <property type="protein sequence ID" value="AAB92566.1"/>
    <property type="molecule type" value="mRNA"/>
</dbReference>
<dbReference type="SMR" id="O54974"/>
<dbReference type="FunCoup" id="O54974">
    <property type="interactions" value="295"/>
</dbReference>
<dbReference type="STRING" id="10090.ENSMUSP00000080179"/>
<dbReference type="BindingDB" id="O54974"/>
<dbReference type="ChEMBL" id="CHEMBL4523143"/>
<dbReference type="PhosphoSitePlus" id="O54974"/>
<dbReference type="PaxDb" id="10090-ENSMUSP00000080179"/>
<dbReference type="PeptideAtlas" id="O54974"/>
<dbReference type="ProteomicsDB" id="252465"/>
<dbReference type="AGR" id="MGI:1316742"/>
<dbReference type="MGI" id="MGI:1316742">
    <property type="gene designation" value="Lgals7"/>
</dbReference>
<dbReference type="eggNOG" id="KOG3587">
    <property type="taxonomic scope" value="Eukaryota"/>
</dbReference>
<dbReference type="InParanoid" id="O54974"/>
<dbReference type="OrthoDB" id="6251307at2759"/>
<dbReference type="PhylomeDB" id="O54974"/>
<dbReference type="ChiTaRS" id="Lgals7">
    <property type="organism name" value="mouse"/>
</dbReference>
<dbReference type="PRO" id="PR:O54974"/>
<dbReference type="Proteomes" id="UP000000589">
    <property type="component" value="Unplaced"/>
</dbReference>
<dbReference type="RNAct" id="O54974">
    <property type="molecule type" value="protein"/>
</dbReference>
<dbReference type="GO" id="GO:0001533">
    <property type="term" value="C:cornified envelope"/>
    <property type="evidence" value="ECO:0000314"/>
    <property type="project" value="MGI"/>
</dbReference>
<dbReference type="GO" id="GO:0005737">
    <property type="term" value="C:cytoplasm"/>
    <property type="evidence" value="ECO:0007669"/>
    <property type="project" value="UniProtKB-SubCell"/>
</dbReference>
<dbReference type="GO" id="GO:0005576">
    <property type="term" value="C:extracellular region"/>
    <property type="evidence" value="ECO:0007669"/>
    <property type="project" value="UniProtKB-SubCell"/>
</dbReference>
<dbReference type="GO" id="GO:0005634">
    <property type="term" value="C:nucleus"/>
    <property type="evidence" value="ECO:0007669"/>
    <property type="project" value="UniProtKB-SubCell"/>
</dbReference>
<dbReference type="GO" id="GO:0030246">
    <property type="term" value="F:carbohydrate binding"/>
    <property type="evidence" value="ECO:0007669"/>
    <property type="project" value="UniProtKB-KW"/>
</dbReference>
<dbReference type="GO" id="GO:0006915">
    <property type="term" value="P:apoptotic process"/>
    <property type="evidence" value="ECO:0007669"/>
    <property type="project" value="UniProtKB-KW"/>
</dbReference>
<dbReference type="CDD" id="cd00070">
    <property type="entry name" value="GLECT"/>
    <property type="match status" value="1"/>
</dbReference>
<dbReference type="FunFam" id="2.60.120.200:FF:000021">
    <property type="entry name" value="Galectin"/>
    <property type="match status" value="1"/>
</dbReference>
<dbReference type="Gene3D" id="2.60.120.200">
    <property type="match status" value="1"/>
</dbReference>
<dbReference type="InterPro" id="IPR013320">
    <property type="entry name" value="ConA-like_dom_sf"/>
</dbReference>
<dbReference type="InterPro" id="IPR044156">
    <property type="entry name" value="Galectin-like"/>
</dbReference>
<dbReference type="InterPro" id="IPR001079">
    <property type="entry name" value="Galectin_CRD"/>
</dbReference>
<dbReference type="PANTHER" id="PTHR11346">
    <property type="entry name" value="GALECTIN"/>
    <property type="match status" value="1"/>
</dbReference>
<dbReference type="PANTHER" id="PTHR11346:SF107">
    <property type="entry name" value="GALECTIN-7"/>
    <property type="match status" value="1"/>
</dbReference>
<dbReference type="Pfam" id="PF00337">
    <property type="entry name" value="Gal-bind_lectin"/>
    <property type="match status" value="1"/>
</dbReference>
<dbReference type="SMART" id="SM00908">
    <property type="entry name" value="Gal-bind_lectin"/>
    <property type="match status" value="1"/>
</dbReference>
<dbReference type="SMART" id="SM00276">
    <property type="entry name" value="GLECT"/>
    <property type="match status" value="1"/>
</dbReference>
<dbReference type="SUPFAM" id="SSF49899">
    <property type="entry name" value="Concanavalin A-like lectins/glucanases"/>
    <property type="match status" value="1"/>
</dbReference>
<dbReference type="PROSITE" id="PS51304">
    <property type="entry name" value="GALECTIN"/>
    <property type="match status" value="1"/>
</dbReference>
<keyword id="KW-0053">Apoptosis</keyword>
<keyword id="KW-0963">Cytoplasm</keyword>
<keyword id="KW-0430">Lectin</keyword>
<keyword id="KW-0539">Nucleus</keyword>
<keyword id="KW-1185">Reference proteome</keyword>
<keyword id="KW-0964">Secreted</keyword>
<sequence>MSATHHKTSLPQGVRVGTVMRIRGLVPDQAGRFHVNLLCGEEQGADAALHFNPRLDTSEVVFNTKQQGKWGREERGTGIPFQRGQPFEVLLIATEEGFKAVVGDDEYLHFHHRLPPARVRLVEVGGDVQLHSLNIF</sequence>
<evidence type="ECO:0000250" key="1"/>
<evidence type="ECO:0000255" key="2"/>
<evidence type="ECO:0000255" key="3">
    <source>
        <dbReference type="PROSITE-ProRule" id="PRU00639"/>
    </source>
</evidence>
<gene>
    <name type="primary">Lgals7</name>
</gene>
<name>LEG7_MOUSE</name>
<accession>O54974</accession>
<reference key="1">
    <citation type="journal article" date="1998" name="Differentiation">
        <title>Galectin-7, a marker of all types of stratified epithelia.</title>
        <authorList>
            <person name="Magnaldo T."/>
            <person name="Fowlis D."/>
            <person name="Darmon M."/>
        </authorList>
    </citation>
    <scope>NUCLEOTIDE SEQUENCE [MRNA]</scope>
    <source>
        <strain>C57BL/6J</strain>
    </source>
</reference>
<comment type="function">
    <text evidence="1">Could be involved in cell-cell and/or cell-matrix interactions necessary for normal growth control. Pro-apoptotic protein that functions intracellularly upstream of JNK activation and cytochrome c release (By similarity).</text>
</comment>
<comment type="subunit">
    <text evidence="1">Monomer.</text>
</comment>
<comment type="subcellular location">
    <subcellularLocation>
        <location evidence="1">Cytoplasm</location>
    </subcellularLocation>
    <subcellularLocation>
        <location evidence="1">Nucleus</location>
    </subcellularLocation>
    <subcellularLocation>
        <location evidence="1">Secreted</location>
    </subcellularLocation>
    <text evidence="1">May be secreted by a non-classical secretory pathway.</text>
</comment>
<proteinExistence type="evidence at transcript level"/>
<protein>
    <recommendedName>
        <fullName>Galectin-7</fullName>
        <shortName>Gal-7</shortName>
    </recommendedName>
</protein>
<organism>
    <name type="scientific">Mus musculus</name>
    <name type="common">Mouse</name>
    <dbReference type="NCBI Taxonomy" id="10090"/>
    <lineage>
        <taxon>Eukaryota</taxon>
        <taxon>Metazoa</taxon>
        <taxon>Chordata</taxon>
        <taxon>Craniata</taxon>
        <taxon>Vertebrata</taxon>
        <taxon>Euteleostomi</taxon>
        <taxon>Mammalia</taxon>
        <taxon>Eutheria</taxon>
        <taxon>Euarchontoglires</taxon>
        <taxon>Glires</taxon>
        <taxon>Rodentia</taxon>
        <taxon>Myomorpha</taxon>
        <taxon>Muroidea</taxon>
        <taxon>Muridae</taxon>
        <taxon>Murinae</taxon>
        <taxon>Mus</taxon>
        <taxon>Mus</taxon>
    </lineage>
</organism>